<evidence type="ECO:0000255" key="1"/>
<evidence type="ECO:0000255" key="2">
    <source>
        <dbReference type="PROSITE-ProRule" id="PRU01099"/>
    </source>
</evidence>
<evidence type="ECO:0000256" key="3">
    <source>
        <dbReference type="SAM" id="MobiDB-lite"/>
    </source>
</evidence>
<evidence type="ECO:0000269" key="4">
    <source>
    </source>
</evidence>
<proteinExistence type="evidence at transcript level"/>
<organism>
    <name type="scientific">Piromyces equi</name>
    <dbReference type="NCBI Taxonomy" id="99929"/>
    <lineage>
        <taxon>Eukaryota</taxon>
        <taxon>Fungi</taxon>
        <taxon>Fungi incertae sedis</taxon>
        <taxon>Chytridiomycota</taxon>
        <taxon>Chytridiomycota incertae sedis</taxon>
        <taxon>Neocallimastigomycetes</taxon>
        <taxon>Neocallimastigales</taxon>
        <taxon>Neocallimastigaceae</taxon>
        <taxon>Piromyces</taxon>
    </lineage>
</organism>
<sequence>MKTSIVLSIVALFLTSKASADCWSERLGWPCCSDSNAEVIYVDDDGDWGVENNDWCGIQKEEENNNSWDMGDWNQGGNQGGGMPWGDFGGNQGGGMQWGDFGGNQGGGMPWGDFGGNQGGGMPWGDFGGNQGGNQGGGMPWGDFGGNQGGNQGGGMPWGDFGGNQGGGMQWGDFGGNQGGNQGGGMPWGDFGGNQGGGMQWGDFGGNQGGNQGGGMPWGDFGGNQGGGMQWGDFGGNQGGGMQWGDFGGNQGGNQDWGNQGGNSGPTVEYSTDVDCSGKTLKSNTNLNINGRKVIVKFPSGFTGDKAAPLLINYHPIMGSASQWESGSQTAKAALNDGAIVAFMDGAQGPMGQAWNVGPCCTDADDVQFTRNFIKEITSKACVDPKRIYAAGFSMGGGMSNYAGCQLADVIAAAAPSAFDLAKEIVDGGKCKPARPFPILNFRGTQDNVVMYNGGLSQVVQGKPITFMGAKNNFKEWAKMNGCTGEPKQNTPGNNCEMYENCKGGVKVGLCTINGGGHAEGDGKMGWDFVKQFSLP</sequence>
<gene>
    <name type="primary">ESTA</name>
</gene>
<feature type="signal peptide" evidence="1">
    <location>
        <begin position="1"/>
        <end position="20"/>
    </location>
</feature>
<feature type="chain" id="PRO_0000021230" description="Feruloyl esterase B">
    <location>
        <begin position="21"/>
        <end position="536"/>
    </location>
</feature>
<feature type="domain" description="CBM10" evidence="2">
    <location>
        <begin position="21"/>
        <end position="59"/>
    </location>
</feature>
<feature type="repeat" description="1">
    <location>
        <begin position="78"/>
        <end position="90"/>
    </location>
</feature>
<feature type="repeat" description="2">
    <location>
        <begin position="91"/>
        <end position="103"/>
    </location>
</feature>
<feature type="repeat" description="3">
    <location>
        <begin position="104"/>
        <end position="116"/>
    </location>
</feature>
<feature type="repeat" description="4">
    <location>
        <begin position="117"/>
        <end position="129"/>
    </location>
</feature>
<feature type="repeat" description="5">
    <location>
        <begin position="134"/>
        <end position="146"/>
    </location>
</feature>
<feature type="repeat" description="6">
    <location>
        <begin position="151"/>
        <end position="163"/>
    </location>
</feature>
<feature type="repeat" description="7">
    <location>
        <begin position="164"/>
        <end position="176"/>
    </location>
</feature>
<feature type="repeat" description="8">
    <location>
        <begin position="181"/>
        <end position="193"/>
    </location>
</feature>
<feature type="repeat" description="9">
    <location>
        <begin position="194"/>
        <end position="206"/>
    </location>
</feature>
<feature type="repeat" description="10">
    <location>
        <begin position="211"/>
        <end position="223"/>
    </location>
</feature>
<feature type="repeat" description="11">
    <location>
        <begin position="224"/>
        <end position="236"/>
    </location>
</feature>
<feature type="repeat" description="12">
    <location>
        <begin position="237"/>
        <end position="249"/>
    </location>
</feature>
<feature type="region of interest" description="Cellulose-binding">
    <location>
        <begin position="22"/>
        <end position="59"/>
    </location>
</feature>
<feature type="region of interest" description="12 X 13 AA repeats of N-Q-G-G-G-M-[PQ]-W-G-D-F-G-G">
    <location>
        <begin position="78"/>
        <end position="249"/>
    </location>
</feature>
<feature type="region of interest" description="Disordered" evidence="3">
    <location>
        <begin position="203"/>
        <end position="273"/>
    </location>
</feature>
<feature type="region of interest" description="Catalytic">
    <location>
        <begin position="257"/>
        <end position="536"/>
    </location>
</feature>
<feature type="compositionally biased region" description="Gly residues" evidence="3">
    <location>
        <begin position="203"/>
        <end position="252"/>
    </location>
</feature>
<feature type="glycosylation site" description="N-linked (GlcNAc...) asparagine" evidence="1">
    <location>
        <position position="65"/>
    </location>
</feature>
<comment type="function">
    <text evidence="4">Involved in degradation of plant cell walls. Hydrolyzes of the feruloyl-arabinose ester bond in arabinoxylans as well as the feruloyl-galactose and feruloyl-arabinose ester bonds in pectin.</text>
</comment>
<comment type="catalytic activity">
    <reaction>
        <text>feruloyl-polysaccharide + H2O = ferulate + polysaccharide.</text>
        <dbReference type="EC" id="3.1.1.73"/>
    </reaction>
</comment>
<comment type="activity regulation">
    <text>Inhibited by the specific serine esterase inhibitor AEBSF.</text>
</comment>
<comment type="subunit">
    <text>Component of the multienzyme cellulase-hemicellulase complex.</text>
</comment>
<comment type="subcellular location">
    <subcellularLocation>
        <location>Secreted</location>
    </subcellularLocation>
</comment>
<accession>Q9Y871</accession>
<reference key="1">
    <citation type="journal article" date="1999" name="Biochem. J.">
        <title>A modular cinnamoyl ester hydrolase from the anaerobic fungus Piromyces equi acts synergistically with xylanase and is part of a multiprotein cellulose-binding cellulase-hemicellulase complex.</title>
        <authorList>
            <person name="Fillingham I.J."/>
            <person name="Kroon P.A."/>
            <person name="Williamson G."/>
            <person name="Gilbert H.J."/>
            <person name="Hazlewood G.P."/>
        </authorList>
    </citation>
    <scope>NUCLEOTIDE SEQUENCE [MRNA]</scope>
    <scope>FUNCTION</scope>
</reference>
<keyword id="KW-0119">Carbohydrate metabolism</keyword>
<keyword id="KW-0325">Glycoprotein</keyword>
<keyword id="KW-0378">Hydrolase</keyword>
<keyword id="KW-0624">Polysaccharide degradation</keyword>
<keyword id="KW-0677">Repeat</keyword>
<keyword id="KW-0964">Secreted</keyword>
<keyword id="KW-0719">Serine esterase</keyword>
<keyword id="KW-0732">Signal</keyword>
<keyword id="KW-0858">Xylan degradation</keyword>
<protein>
    <recommendedName>
        <fullName>Feruloyl esterase B</fullName>
        <ecNumber>3.1.1.73</ecNumber>
    </recommendedName>
    <alternativeName>
        <fullName>Cinnamoyl ester hydrolase</fullName>
    </alternativeName>
    <alternativeName>
        <fullName>Esterase A</fullName>
        <shortName>EstA</shortName>
    </alternativeName>
    <alternativeName>
        <fullName>Ferulic acid esterase B</fullName>
    </alternativeName>
</protein>
<dbReference type="EC" id="3.1.1.73"/>
<dbReference type="EMBL" id="AF164516">
    <property type="protein sequence ID" value="AAD45376.1"/>
    <property type="molecule type" value="mRNA"/>
</dbReference>
<dbReference type="SMR" id="Q9Y871"/>
<dbReference type="ESTHER" id="pireq-faeb">
    <property type="family name" value="Esterase_phb"/>
</dbReference>
<dbReference type="GlyCosmos" id="Q9Y871">
    <property type="glycosylation" value="1 site, No reported glycans"/>
</dbReference>
<dbReference type="BRENDA" id="3.1.1.73">
    <property type="organism ID" value="4866"/>
</dbReference>
<dbReference type="GO" id="GO:0005576">
    <property type="term" value="C:extracellular region"/>
    <property type="evidence" value="ECO:0000314"/>
    <property type="project" value="UniProtKB"/>
</dbReference>
<dbReference type="GO" id="GO:0030600">
    <property type="term" value="F:feruloyl esterase activity"/>
    <property type="evidence" value="ECO:0000314"/>
    <property type="project" value="UniProtKB"/>
</dbReference>
<dbReference type="GO" id="GO:0016998">
    <property type="term" value="P:cell wall macromolecule catabolic process"/>
    <property type="evidence" value="ECO:0000314"/>
    <property type="project" value="UniProtKB"/>
</dbReference>
<dbReference type="GO" id="GO:0045490">
    <property type="term" value="P:pectin catabolic process"/>
    <property type="evidence" value="ECO:0000314"/>
    <property type="project" value="UniProtKB"/>
</dbReference>
<dbReference type="GO" id="GO:0045493">
    <property type="term" value="P:xylan catabolic process"/>
    <property type="evidence" value="ECO:0000314"/>
    <property type="project" value="UniProtKB"/>
</dbReference>
<dbReference type="FunFam" id="3.40.50.1820:FF:000478">
    <property type="entry name" value="Alpha/beta-hydrolase"/>
    <property type="match status" value="1"/>
</dbReference>
<dbReference type="Gene3D" id="3.40.50.1820">
    <property type="entry name" value="alpha/beta hydrolase"/>
    <property type="match status" value="1"/>
</dbReference>
<dbReference type="Gene3D" id="3.90.1220.10">
    <property type="entry name" value="Cellulose docking domain, dockering"/>
    <property type="match status" value="1"/>
</dbReference>
<dbReference type="InterPro" id="IPR029058">
    <property type="entry name" value="AB_hydrolase_fold"/>
</dbReference>
<dbReference type="InterPro" id="IPR002883">
    <property type="entry name" value="CBM10/Dockerin_dom"/>
</dbReference>
<dbReference type="InterPro" id="IPR009034">
    <property type="entry name" value="Dockerin_dom_fun_sf"/>
</dbReference>
<dbReference type="InterPro" id="IPR043595">
    <property type="entry name" value="FaeB/C/D"/>
</dbReference>
<dbReference type="PANTHER" id="PTHR38050">
    <property type="match status" value="1"/>
</dbReference>
<dbReference type="PANTHER" id="PTHR38050:SF2">
    <property type="entry name" value="FERULOYL ESTERASE C-RELATED"/>
    <property type="match status" value="1"/>
</dbReference>
<dbReference type="Pfam" id="PF02013">
    <property type="entry name" value="CBM_10"/>
    <property type="match status" value="1"/>
</dbReference>
<dbReference type="SUPFAM" id="SSF53474">
    <property type="entry name" value="alpha/beta-Hydrolases"/>
    <property type="match status" value="1"/>
</dbReference>
<dbReference type="SUPFAM" id="SSF64571">
    <property type="entry name" value="Cellulose docking domain, dockering"/>
    <property type="match status" value="1"/>
</dbReference>
<dbReference type="PROSITE" id="PS51763">
    <property type="entry name" value="CBM10"/>
    <property type="match status" value="1"/>
</dbReference>
<name>FAEB_PIREQ</name>